<dbReference type="EC" id="3.6.1.66" evidence="1"/>
<dbReference type="EMBL" id="BX470128">
    <property type="status" value="NOT_ANNOTATED_CDS"/>
    <property type="molecule type" value="Genomic_DNA"/>
</dbReference>
<dbReference type="EMBL" id="CT563248">
    <property type="protein sequence ID" value="CAN88293.1"/>
    <property type="molecule type" value="Genomic_DNA"/>
</dbReference>
<dbReference type="EMBL" id="BC154470">
    <property type="protein sequence ID" value="AAI54471.1"/>
    <property type="molecule type" value="mRNA"/>
</dbReference>
<dbReference type="RefSeq" id="NP_001093456.1">
    <property type="nucleotide sequence ID" value="NM_001099986.2"/>
</dbReference>
<dbReference type="SMR" id="A5WVX0"/>
<dbReference type="FunCoup" id="A5WVX0">
    <property type="interactions" value="1698"/>
</dbReference>
<dbReference type="STRING" id="7955.ENSDARP00000074674"/>
<dbReference type="PaxDb" id="7955-ENSDARP00000074674"/>
<dbReference type="PeptideAtlas" id="A5WVX0"/>
<dbReference type="Ensembl" id="ENSDART00000080224">
    <property type="protein sequence ID" value="ENSDARP00000074674"/>
    <property type="gene ID" value="ENSDARG00000057529"/>
</dbReference>
<dbReference type="GeneID" id="557834"/>
<dbReference type="KEGG" id="dre:557834"/>
<dbReference type="AGR" id="ZFIN:ZDB-GENE-070705-218"/>
<dbReference type="CTD" id="3704"/>
<dbReference type="ZFIN" id="ZDB-GENE-070705-218">
    <property type="gene designation" value="itpa"/>
</dbReference>
<dbReference type="eggNOG" id="KOG3222">
    <property type="taxonomic scope" value="Eukaryota"/>
</dbReference>
<dbReference type="HOGENOM" id="CLU_082080_1_1_1"/>
<dbReference type="InParanoid" id="A5WVX0"/>
<dbReference type="OMA" id="YDPIFQP"/>
<dbReference type="OrthoDB" id="6288734at2759"/>
<dbReference type="PhylomeDB" id="A5WVX0"/>
<dbReference type="TreeFam" id="TF105614"/>
<dbReference type="Reactome" id="R-DRE-74259">
    <property type="pathway name" value="Purine catabolism"/>
</dbReference>
<dbReference type="Reactome" id="R-DRE-9755088">
    <property type="pathway name" value="Ribavirin ADME"/>
</dbReference>
<dbReference type="PRO" id="PR:A5WVX0"/>
<dbReference type="Proteomes" id="UP000000437">
    <property type="component" value="Chromosome 20"/>
</dbReference>
<dbReference type="Bgee" id="ENSDARG00000057529">
    <property type="expression patterns" value="Expressed in testis and 21 other cell types or tissues"/>
</dbReference>
<dbReference type="GO" id="GO:0005737">
    <property type="term" value="C:cytoplasm"/>
    <property type="evidence" value="ECO:0000318"/>
    <property type="project" value="GO_Central"/>
</dbReference>
<dbReference type="GO" id="GO:0035870">
    <property type="term" value="F:dITP diphosphatase activity"/>
    <property type="evidence" value="ECO:0007669"/>
    <property type="project" value="RHEA"/>
</dbReference>
<dbReference type="GO" id="GO:0036220">
    <property type="term" value="F:ITP diphosphatase activity"/>
    <property type="evidence" value="ECO:0007669"/>
    <property type="project" value="RHEA"/>
</dbReference>
<dbReference type="GO" id="GO:0046872">
    <property type="term" value="F:metal ion binding"/>
    <property type="evidence" value="ECO:0007669"/>
    <property type="project" value="UniProtKB-KW"/>
</dbReference>
<dbReference type="GO" id="GO:0047429">
    <property type="term" value="F:nucleoside triphosphate diphosphatase activity"/>
    <property type="evidence" value="ECO:0000318"/>
    <property type="project" value="GO_Central"/>
</dbReference>
<dbReference type="GO" id="GO:0000166">
    <property type="term" value="F:nucleotide binding"/>
    <property type="evidence" value="ECO:0007669"/>
    <property type="project" value="UniProtKB-KW"/>
</dbReference>
<dbReference type="GO" id="GO:0036222">
    <property type="term" value="F:XTP diphosphatase activity"/>
    <property type="evidence" value="ECO:0007669"/>
    <property type="project" value="RHEA"/>
</dbReference>
<dbReference type="GO" id="GO:0009204">
    <property type="term" value="P:deoxyribonucleoside triphosphate catabolic process"/>
    <property type="evidence" value="ECO:0007669"/>
    <property type="project" value="UniProtKB-UniRule"/>
</dbReference>
<dbReference type="GO" id="GO:0009143">
    <property type="term" value="P:nucleoside triphosphate catabolic process"/>
    <property type="evidence" value="ECO:0000318"/>
    <property type="project" value="GO_Central"/>
</dbReference>
<dbReference type="GO" id="GO:0009117">
    <property type="term" value="P:nucleotide metabolic process"/>
    <property type="evidence" value="ECO:0007669"/>
    <property type="project" value="UniProtKB-KW"/>
</dbReference>
<dbReference type="CDD" id="cd00515">
    <property type="entry name" value="HAM1"/>
    <property type="match status" value="1"/>
</dbReference>
<dbReference type="FunFam" id="3.90.950.10:FF:000003">
    <property type="entry name" value="Inosine triphosphate pyrophosphatase"/>
    <property type="match status" value="1"/>
</dbReference>
<dbReference type="Gene3D" id="3.90.950.10">
    <property type="match status" value="1"/>
</dbReference>
<dbReference type="HAMAP" id="MF_03148">
    <property type="entry name" value="HAM1_NTPase"/>
    <property type="match status" value="1"/>
</dbReference>
<dbReference type="InterPro" id="IPR027502">
    <property type="entry name" value="ITPase"/>
</dbReference>
<dbReference type="InterPro" id="IPR029001">
    <property type="entry name" value="ITPase-like_fam"/>
</dbReference>
<dbReference type="InterPro" id="IPR002637">
    <property type="entry name" value="RdgB/HAM1"/>
</dbReference>
<dbReference type="NCBIfam" id="TIGR00042">
    <property type="entry name" value="RdgB/HAM1 family non-canonical purine NTP pyrophosphatase"/>
    <property type="match status" value="1"/>
</dbReference>
<dbReference type="PANTHER" id="PTHR11067:SF9">
    <property type="entry name" value="INOSINE TRIPHOSPHATE PYROPHOSPHATASE"/>
    <property type="match status" value="1"/>
</dbReference>
<dbReference type="PANTHER" id="PTHR11067">
    <property type="entry name" value="INOSINE TRIPHOSPHATE PYROPHOSPHATASE/HAM1 PROTEIN"/>
    <property type="match status" value="1"/>
</dbReference>
<dbReference type="Pfam" id="PF01725">
    <property type="entry name" value="Ham1p_like"/>
    <property type="match status" value="1"/>
</dbReference>
<dbReference type="SUPFAM" id="SSF52972">
    <property type="entry name" value="ITPase-like"/>
    <property type="match status" value="1"/>
</dbReference>
<organism>
    <name type="scientific">Danio rerio</name>
    <name type="common">Zebrafish</name>
    <name type="synonym">Brachydanio rerio</name>
    <dbReference type="NCBI Taxonomy" id="7955"/>
    <lineage>
        <taxon>Eukaryota</taxon>
        <taxon>Metazoa</taxon>
        <taxon>Chordata</taxon>
        <taxon>Craniata</taxon>
        <taxon>Vertebrata</taxon>
        <taxon>Euteleostomi</taxon>
        <taxon>Actinopterygii</taxon>
        <taxon>Neopterygii</taxon>
        <taxon>Teleostei</taxon>
        <taxon>Ostariophysi</taxon>
        <taxon>Cypriniformes</taxon>
        <taxon>Danionidae</taxon>
        <taxon>Danioninae</taxon>
        <taxon>Danio</taxon>
    </lineage>
</organism>
<reference key="1">
    <citation type="journal article" date="2013" name="Nature">
        <title>The zebrafish reference genome sequence and its relationship to the human genome.</title>
        <authorList>
            <person name="Howe K."/>
            <person name="Clark M.D."/>
            <person name="Torroja C.F."/>
            <person name="Torrance J."/>
            <person name="Berthelot C."/>
            <person name="Muffato M."/>
            <person name="Collins J.E."/>
            <person name="Humphray S."/>
            <person name="McLaren K."/>
            <person name="Matthews L."/>
            <person name="McLaren S."/>
            <person name="Sealy I."/>
            <person name="Caccamo M."/>
            <person name="Churcher C."/>
            <person name="Scott C."/>
            <person name="Barrett J.C."/>
            <person name="Koch R."/>
            <person name="Rauch G.J."/>
            <person name="White S."/>
            <person name="Chow W."/>
            <person name="Kilian B."/>
            <person name="Quintais L.T."/>
            <person name="Guerra-Assuncao J.A."/>
            <person name="Zhou Y."/>
            <person name="Gu Y."/>
            <person name="Yen J."/>
            <person name="Vogel J.H."/>
            <person name="Eyre T."/>
            <person name="Redmond S."/>
            <person name="Banerjee R."/>
            <person name="Chi J."/>
            <person name="Fu B."/>
            <person name="Langley E."/>
            <person name="Maguire S.F."/>
            <person name="Laird G.K."/>
            <person name="Lloyd D."/>
            <person name="Kenyon E."/>
            <person name="Donaldson S."/>
            <person name="Sehra H."/>
            <person name="Almeida-King J."/>
            <person name="Loveland J."/>
            <person name="Trevanion S."/>
            <person name="Jones M."/>
            <person name="Quail M."/>
            <person name="Willey D."/>
            <person name="Hunt A."/>
            <person name="Burton J."/>
            <person name="Sims S."/>
            <person name="McLay K."/>
            <person name="Plumb B."/>
            <person name="Davis J."/>
            <person name="Clee C."/>
            <person name="Oliver K."/>
            <person name="Clark R."/>
            <person name="Riddle C."/>
            <person name="Elliot D."/>
            <person name="Threadgold G."/>
            <person name="Harden G."/>
            <person name="Ware D."/>
            <person name="Begum S."/>
            <person name="Mortimore B."/>
            <person name="Kerry G."/>
            <person name="Heath P."/>
            <person name="Phillimore B."/>
            <person name="Tracey A."/>
            <person name="Corby N."/>
            <person name="Dunn M."/>
            <person name="Johnson C."/>
            <person name="Wood J."/>
            <person name="Clark S."/>
            <person name="Pelan S."/>
            <person name="Griffiths G."/>
            <person name="Smith M."/>
            <person name="Glithero R."/>
            <person name="Howden P."/>
            <person name="Barker N."/>
            <person name="Lloyd C."/>
            <person name="Stevens C."/>
            <person name="Harley J."/>
            <person name="Holt K."/>
            <person name="Panagiotidis G."/>
            <person name="Lovell J."/>
            <person name="Beasley H."/>
            <person name="Henderson C."/>
            <person name="Gordon D."/>
            <person name="Auger K."/>
            <person name="Wright D."/>
            <person name="Collins J."/>
            <person name="Raisen C."/>
            <person name="Dyer L."/>
            <person name="Leung K."/>
            <person name="Robertson L."/>
            <person name="Ambridge K."/>
            <person name="Leongamornlert D."/>
            <person name="McGuire S."/>
            <person name="Gilderthorp R."/>
            <person name="Griffiths C."/>
            <person name="Manthravadi D."/>
            <person name="Nichol S."/>
            <person name="Barker G."/>
            <person name="Whitehead S."/>
            <person name="Kay M."/>
            <person name="Brown J."/>
            <person name="Murnane C."/>
            <person name="Gray E."/>
            <person name="Humphries M."/>
            <person name="Sycamore N."/>
            <person name="Barker D."/>
            <person name="Saunders D."/>
            <person name="Wallis J."/>
            <person name="Babbage A."/>
            <person name="Hammond S."/>
            <person name="Mashreghi-Mohammadi M."/>
            <person name="Barr L."/>
            <person name="Martin S."/>
            <person name="Wray P."/>
            <person name="Ellington A."/>
            <person name="Matthews N."/>
            <person name="Ellwood M."/>
            <person name="Woodmansey R."/>
            <person name="Clark G."/>
            <person name="Cooper J."/>
            <person name="Tromans A."/>
            <person name="Grafham D."/>
            <person name="Skuce C."/>
            <person name="Pandian R."/>
            <person name="Andrews R."/>
            <person name="Harrison E."/>
            <person name="Kimberley A."/>
            <person name="Garnett J."/>
            <person name="Fosker N."/>
            <person name="Hall R."/>
            <person name="Garner P."/>
            <person name="Kelly D."/>
            <person name="Bird C."/>
            <person name="Palmer S."/>
            <person name="Gehring I."/>
            <person name="Berger A."/>
            <person name="Dooley C.M."/>
            <person name="Ersan-Urun Z."/>
            <person name="Eser C."/>
            <person name="Geiger H."/>
            <person name="Geisler M."/>
            <person name="Karotki L."/>
            <person name="Kirn A."/>
            <person name="Konantz J."/>
            <person name="Konantz M."/>
            <person name="Oberlander M."/>
            <person name="Rudolph-Geiger S."/>
            <person name="Teucke M."/>
            <person name="Lanz C."/>
            <person name="Raddatz G."/>
            <person name="Osoegawa K."/>
            <person name="Zhu B."/>
            <person name="Rapp A."/>
            <person name="Widaa S."/>
            <person name="Langford C."/>
            <person name="Yang F."/>
            <person name="Schuster S.C."/>
            <person name="Carter N.P."/>
            <person name="Harrow J."/>
            <person name="Ning Z."/>
            <person name="Herrero J."/>
            <person name="Searle S.M."/>
            <person name="Enright A."/>
            <person name="Geisler R."/>
            <person name="Plasterk R.H."/>
            <person name="Lee C."/>
            <person name="Westerfield M."/>
            <person name="de Jong P.J."/>
            <person name="Zon L.I."/>
            <person name="Postlethwait J.H."/>
            <person name="Nusslein-Volhard C."/>
            <person name="Hubbard T.J."/>
            <person name="Roest Crollius H."/>
            <person name="Rogers J."/>
            <person name="Stemple D.L."/>
        </authorList>
    </citation>
    <scope>NUCLEOTIDE SEQUENCE [LARGE SCALE GENOMIC DNA]</scope>
    <source>
        <strain>Tuebingen</strain>
    </source>
</reference>
<reference key="2">
    <citation type="submission" date="2007-11" db="EMBL/GenBank/DDBJ databases">
        <authorList>
            <consortium name="NIH - Zebrafish Gene Collection (ZGC) project"/>
        </authorList>
    </citation>
    <scope>NUCLEOTIDE SEQUENCE [LARGE SCALE MRNA]</scope>
</reference>
<proteinExistence type="evidence at transcript level"/>
<keyword id="KW-0963">Cytoplasm</keyword>
<keyword id="KW-0378">Hydrolase</keyword>
<keyword id="KW-0460">Magnesium</keyword>
<keyword id="KW-0464">Manganese</keyword>
<keyword id="KW-0479">Metal-binding</keyword>
<keyword id="KW-0546">Nucleotide metabolism</keyword>
<keyword id="KW-0547">Nucleotide-binding</keyword>
<keyword id="KW-1185">Reference proteome</keyword>
<feature type="chain" id="PRO_0000413103" description="Inosine triphosphate pyrophosphatase">
    <location>
        <begin position="1"/>
        <end position="203"/>
    </location>
</feature>
<feature type="binding site" evidence="1">
    <location>
        <begin position="13"/>
        <end position="18"/>
    </location>
    <ligand>
        <name>ITP</name>
        <dbReference type="ChEBI" id="CHEBI:61402"/>
    </ligand>
</feature>
<feature type="binding site" evidence="1">
    <location>
        <position position="43"/>
    </location>
    <ligand>
        <name>Mg(2+)</name>
        <dbReference type="ChEBI" id="CHEBI:18420"/>
    </ligand>
</feature>
<feature type="binding site" evidence="1">
    <location>
        <position position="55"/>
    </location>
    <ligand>
        <name>ITP</name>
        <dbReference type="ChEBI" id="CHEBI:61402"/>
    </ligand>
</feature>
<feature type="binding site" evidence="1">
    <location>
        <begin position="71"/>
        <end position="72"/>
    </location>
    <ligand>
        <name>ITP</name>
        <dbReference type="ChEBI" id="CHEBI:61402"/>
    </ligand>
</feature>
<feature type="binding site" evidence="1">
    <location>
        <position position="88"/>
    </location>
    <ligand>
        <name>ITP</name>
        <dbReference type="ChEBI" id="CHEBI:61402"/>
    </ligand>
</feature>
<feature type="binding site" evidence="1">
    <location>
        <begin position="147"/>
        <end position="150"/>
    </location>
    <ligand>
        <name>ITP</name>
        <dbReference type="ChEBI" id="CHEBI:61402"/>
    </ligand>
</feature>
<feature type="binding site" evidence="1">
    <location>
        <position position="170"/>
    </location>
    <ligand>
        <name>ITP</name>
        <dbReference type="ChEBI" id="CHEBI:61402"/>
    </ligand>
</feature>
<feature type="binding site" evidence="1">
    <location>
        <begin position="175"/>
        <end position="176"/>
    </location>
    <ligand>
        <name>ITP</name>
        <dbReference type="ChEBI" id="CHEBI:61402"/>
    </ligand>
</feature>
<feature type="sequence conflict" description="In Ref. 2; AAI54471." evidence="2" ref="2">
    <original>A</original>
    <variation>P</variation>
    <location>
        <position position="104"/>
    </location>
</feature>
<accession>A5WVX0</accession>
<accession>A8WFV3</accession>
<protein>
    <recommendedName>
        <fullName evidence="1">Inosine triphosphate pyrophosphatase</fullName>
        <shortName evidence="1">ITPase</shortName>
        <shortName evidence="1">Inosine triphosphatase</shortName>
        <ecNumber evidence="1">3.6.1.66</ecNumber>
    </recommendedName>
    <alternativeName>
        <fullName evidence="1">Non-canonical purine NTP pyrophosphatase</fullName>
    </alternativeName>
    <alternativeName>
        <fullName evidence="1">Non-standard purine NTP pyrophosphatase</fullName>
    </alternativeName>
    <alternativeName>
        <fullName evidence="1">Nucleoside-triphosphate diphosphatase</fullName>
    </alternativeName>
    <alternativeName>
        <fullName evidence="1">Nucleoside-triphosphate pyrophosphatase</fullName>
        <shortName evidence="1">NTPase</shortName>
    </alternativeName>
    <alternativeName>
        <fullName evidence="1">XTP/dITP diphosphatase</fullName>
    </alternativeName>
</protein>
<comment type="function">
    <text evidence="1">Pyrophosphatase that hydrolyzes the non-canonical purine nucleotides inosine triphosphate (ITP), deoxyinosine triphosphate (dITP) as well as 2'-deoxy-N-6-hydroxylaminopurine triphosphate (dHAPTP) and xanthosine 5'-triphosphate (XTP) to their respective monophosphate derivatives. The enzyme does not distinguish between the deoxy- and ribose forms. Probably excludes non-canonical purines from RNA and DNA precursor pools, thus preventing their incorporation into RNA and DNA and avoiding chromosomal lesions.</text>
</comment>
<comment type="catalytic activity">
    <reaction evidence="1">
        <text>ITP + H2O = IMP + diphosphate + H(+)</text>
        <dbReference type="Rhea" id="RHEA:29399"/>
        <dbReference type="ChEBI" id="CHEBI:15377"/>
        <dbReference type="ChEBI" id="CHEBI:15378"/>
        <dbReference type="ChEBI" id="CHEBI:33019"/>
        <dbReference type="ChEBI" id="CHEBI:58053"/>
        <dbReference type="ChEBI" id="CHEBI:61402"/>
        <dbReference type="EC" id="3.6.1.66"/>
    </reaction>
    <physiologicalReaction direction="left-to-right" evidence="1">
        <dbReference type="Rhea" id="RHEA:29400"/>
    </physiologicalReaction>
</comment>
<comment type="catalytic activity">
    <reaction evidence="1">
        <text>dITP + H2O = dIMP + diphosphate + H(+)</text>
        <dbReference type="Rhea" id="RHEA:28342"/>
        <dbReference type="ChEBI" id="CHEBI:15377"/>
        <dbReference type="ChEBI" id="CHEBI:15378"/>
        <dbReference type="ChEBI" id="CHEBI:33019"/>
        <dbReference type="ChEBI" id="CHEBI:61194"/>
        <dbReference type="ChEBI" id="CHEBI:61382"/>
        <dbReference type="EC" id="3.6.1.66"/>
    </reaction>
    <physiologicalReaction direction="left-to-right" evidence="1">
        <dbReference type="Rhea" id="RHEA:28343"/>
    </physiologicalReaction>
</comment>
<comment type="catalytic activity">
    <reaction evidence="1">
        <text>XTP + H2O = XMP + diphosphate + H(+)</text>
        <dbReference type="Rhea" id="RHEA:28610"/>
        <dbReference type="ChEBI" id="CHEBI:15377"/>
        <dbReference type="ChEBI" id="CHEBI:15378"/>
        <dbReference type="ChEBI" id="CHEBI:33019"/>
        <dbReference type="ChEBI" id="CHEBI:57464"/>
        <dbReference type="ChEBI" id="CHEBI:61314"/>
        <dbReference type="EC" id="3.6.1.66"/>
    </reaction>
    <physiologicalReaction direction="left-to-right" evidence="1">
        <dbReference type="Rhea" id="RHEA:28611"/>
    </physiologicalReaction>
</comment>
<comment type="catalytic activity">
    <reaction evidence="1">
        <text>N(6)-hydroxy-dATP + H2O = N(6)-hydroxy-dAMP + diphosphate + H(+)</text>
        <dbReference type="Rhea" id="RHEA:83971"/>
        <dbReference type="ChEBI" id="CHEBI:15377"/>
        <dbReference type="ChEBI" id="CHEBI:15378"/>
        <dbReference type="ChEBI" id="CHEBI:33019"/>
        <dbReference type="ChEBI" id="CHEBI:233529"/>
        <dbReference type="ChEBI" id="CHEBI:233530"/>
    </reaction>
    <physiologicalReaction direction="left-to-right" evidence="1">
        <dbReference type="Rhea" id="RHEA:83972"/>
    </physiologicalReaction>
</comment>
<comment type="cofactor">
    <cofactor evidence="1">
        <name>Mg(2+)</name>
        <dbReference type="ChEBI" id="CHEBI:18420"/>
    </cofactor>
    <cofactor evidence="1">
        <name>Mn(2+)</name>
        <dbReference type="ChEBI" id="CHEBI:29035"/>
    </cofactor>
    <text evidence="1">Binds 1 divalent metal cation per subunit; can use either Mg(2+) or Mn(2+).</text>
</comment>
<comment type="subunit">
    <text evidence="1">Homodimer.</text>
</comment>
<comment type="subcellular location">
    <subcellularLocation>
        <location evidence="1">Cytoplasm</location>
    </subcellularLocation>
</comment>
<comment type="similarity">
    <text evidence="1">Belongs to the HAM1 NTPase family.</text>
</comment>
<sequence length="203" mass="22869">MAVPTGRALVFVTGNAKKLEEVVQILGDKFPYKLISKKIDLPEYQGEPDDISIQKCKEAARQVDGPVLVEDTCLCFRALEGLPGPYIKWFLDKLKPEGLYKMLAGFEDKSAWALCTFAFCAGKEEPVQLFRGITEGHIVEPRGPRDFGWDPCFQPEGYDKTYAELPKEVKNSISHRYRALAALSEHFCQDNGAPETKRSKHQD</sequence>
<gene>
    <name type="primary">itpa</name>
    <name type="ORF">si:ch73-18j6.1</name>
    <name type="ORF">si:dkey-19f21.1</name>
</gene>
<evidence type="ECO:0000255" key="1">
    <source>
        <dbReference type="HAMAP-Rule" id="MF_03148"/>
    </source>
</evidence>
<evidence type="ECO:0000305" key="2"/>
<name>ITPA_DANRE</name>